<protein>
    <recommendedName>
        <fullName evidence="1">Peptide chain release factor 1</fullName>
        <shortName evidence="1">RF-1</shortName>
    </recommendedName>
</protein>
<dbReference type="EMBL" id="CP001392">
    <property type="protein sequence ID" value="ACM32259.1"/>
    <property type="molecule type" value="Genomic_DNA"/>
</dbReference>
<dbReference type="RefSeq" id="WP_012655760.1">
    <property type="nucleotide sequence ID" value="NC_011992.1"/>
</dbReference>
<dbReference type="SMR" id="B9ME05"/>
<dbReference type="KEGG" id="dia:Dtpsy_0780"/>
<dbReference type="eggNOG" id="COG0216">
    <property type="taxonomic scope" value="Bacteria"/>
</dbReference>
<dbReference type="HOGENOM" id="CLU_036856_0_1_4"/>
<dbReference type="Proteomes" id="UP000000450">
    <property type="component" value="Chromosome"/>
</dbReference>
<dbReference type="GO" id="GO:0005737">
    <property type="term" value="C:cytoplasm"/>
    <property type="evidence" value="ECO:0007669"/>
    <property type="project" value="UniProtKB-SubCell"/>
</dbReference>
<dbReference type="GO" id="GO:0016149">
    <property type="term" value="F:translation release factor activity, codon specific"/>
    <property type="evidence" value="ECO:0007669"/>
    <property type="project" value="UniProtKB-UniRule"/>
</dbReference>
<dbReference type="FunFam" id="3.30.160.20:FF:000004">
    <property type="entry name" value="Peptide chain release factor 1"/>
    <property type="match status" value="1"/>
</dbReference>
<dbReference type="FunFam" id="3.30.70.1660:FF:000002">
    <property type="entry name" value="Peptide chain release factor 1"/>
    <property type="match status" value="1"/>
</dbReference>
<dbReference type="FunFam" id="3.30.70.1660:FF:000004">
    <property type="entry name" value="Peptide chain release factor 1"/>
    <property type="match status" value="1"/>
</dbReference>
<dbReference type="Gene3D" id="3.30.160.20">
    <property type="match status" value="1"/>
</dbReference>
<dbReference type="Gene3D" id="3.30.70.1660">
    <property type="match status" value="1"/>
</dbReference>
<dbReference type="Gene3D" id="6.10.140.1950">
    <property type="match status" value="1"/>
</dbReference>
<dbReference type="HAMAP" id="MF_00093">
    <property type="entry name" value="Rel_fac_1"/>
    <property type="match status" value="1"/>
</dbReference>
<dbReference type="InterPro" id="IPR005139">
    <property type="entry name" value="PCRF"/>
</dbReference>
<dbReference type="InterPro" id="IPR000352">
    <property type="entry name" value="Pep_chain_release_fac_I"/>
</dbReference>
<dbReference type="InterPro" id="IPR045853">
    <property type="entry name" value="Pep_chain_release_fac_I_sf"/>
</dbReference>
<dbReference type="InterPro" id="IPR050057">
    <property type="entry name" value="Prokaryotic/Mito_RF"/>
</dbReference>
<dbReference type="InterPro" id="IPR004373">
    <property type="entry name" value="RF-1"/>
</dbReference>
<dbReference type="NCBIfam" id="TIGR00019">
    <property type="entry name" value="prfA"/>
    <property type="match status" value="1"/>
</dbReference>
<dbReference type="NCBIfam" id="NF001859">
    <property type="entry name" value="PRK00591.1"/>
    <property type="match status" value="1"/>
</dbReference>
<dbReference type="PANTHER" id="PTHR43804">
    <property type="entry name" value="LD18447P"/>
    <property type="match status" value="1"/>
</dbReference>
<dbReference type="PANTHER" id="PTHR43804:SF7">
    <property type="entry name" value="LD18447P"/>
    <property type="match status" value="1"/>
</dbReference>
<dbReference type="Pfam" id="PF03462">
    <property type="entry name" value="PCRF"/>
    <property type="match status" value="1"/>
</dbReference>
<dbReference type="Pfam" id="PF00472">
    <property type="entry name" value="RF-1"/>
    <property type="match status" value="1"/>
</dbReference>
<dbReference type="SMART" id="SM00937">
    <property type="entry name" value="PCRF"/>
    <property type="match status" value="1"/>
</dbReference>
<dbReference type="SUPFAM" id="SSF75620">
    <property type="entry name" value="Release factor"/>
    <property type="match status" value="1"/>
</dbReference>
<dbReference type="PROSITE" id="PS00745">
    <property type="entry name" value="RF_PROK_I"/>
    <property type="match status" value="1"/>
</dbReference>
<accession>B9ME05</accession>
<organism>
    <name type="scientific">Acidovorax ebreus (strain TPSY)</name>
    <name type="common">Diaphorobacter sp. (strain TPSY)</name>
    <dbReference type="NCBI Taxonomy" id="535289"/>
    <lineage>
        <taxon>Bacteria</taxon>
        <taxon>Pseudomonadati</taxon>
        <taxon>Pseudomonadota</taxon>
        <taxon>Betaproteobacteria</taxon>
        <taxon>Burkholderiales</taxon>
        <taxon>Comamonadaceae</taxon>
        <taxon>Diaphorobacter</taxon>
    </lineage>
</organism>
<keyword id="KW-0963">Cytoplasm</keyword>
<keyword id="KW-0488">Methylation</keyword>
<keyword id="KW-0648">Protein biosynthesis</keyword>
<keyword id="KW-1185">Reference proteome</keyword>
<reference key="1">
    <citation type="submission" date="2009-01" db="EMBL/GenBank/DDBJ databases">
        <title>Complete sequence of Diaphorobacter sp. TPSY.</title>
        <authorList>
            <consortium name="US DOE Joint Genome Institute"/>
            <person name="Lucas S."/>
            <person name="Copeland A."/>
            <person name="Lapidus A."/>
            <person name="Glavina del Rio T."/>
            <person name="Tice H."/>
            <person name="Bruce D."/>
            <person name="Goodwin L."/>
            <person name="Pitluck S."/>
            <person name="Chertkov O."/>
            <person name="Brettin T."/>
            <person name="Detter J.C."/>
            <person name="Han C."/>
            <person name="Larimer F."/>
            <person name="Land M."/>
            <person name="Hauser L."/>
            <person name="Kyrpides N."/>
            <person name="Mikhailova N."/>
            <person name="Coates J.D."/>
        </authorList>
    </citation>
    <scope>NUCLEOTIDE SEQUENCE [LARGE SCALE GENOMIC DNA]</scope>
    <source>
        <strain>TPSY</strain>
    </source>
</reference>
<comment type="function">
    <text evidence="1">Peptide chain release factor 1 directs the termination of translation in response to the peptide chain termination codons UAG and UAA.</text>
</comment>
<comment type="subcellular location">
    <subcellularLocation>
        <location evidence="1">Cytoplasm</location>
    </subcellularLocation>
</comment>
<comment type="PTM">
    <text evidence="1">Methylated by PrmC. Methylation increases the termination efficiency of RF1.</text>
</comment>
<comment type="similarity">
    <text evidence="1">Belongs to the prokaryotic/mitochondrial release factor family.</text>
</comment>
<proteinExistence type="inferred from homology"/>
<evidence type="ECO:0000255" key="1">
    <source>
        <dbReference type="HAMAP-Rule" id="MF_00093"/>
    </source>
</evidence>
<sequence length="367" mass="40788">MKPFLRSQLERYAQRLQELDFLLSREDIMADMQQYRSISREHAEVTQVAGRYARYQQREADLAGAREMLEDPDMAEMAQEEIHAAETELVQLEDELQRLLLPKDPDDERNAFIEIRAGTGGDESALFAGDLARMYTRYAATVGWKVEVMSANESEIGGYKEVVLRIEGQPGTGPSGSGVYGALKFESGGHRVQRVPATETQGRIHTSACTVAVMPEPDEHQAITLNPADLRIDTFRASGAGGQHINKTDSAVRVVHLPTGIVAECQDGRSQHSNKAKALQVLQARIQEKERSERAAKEAALRKGLIGSGDRSDRIRTYNFPQGRLTDHRINLTLYKLLAIMEGDLGEVLQALQHAREAELLAELGLE</sequence>
<gene>
    <name evidence="1" type="primary">prfA</name>
    <name type="ordered locus">Dtpsy_0780</name>
</gene>
<name>RF1_ACIET</name>
<feature type="chain" id="PRO_1000193487" description="Peptide chain release factor 1">
    <location>
        <begin position="1"/>
        <end position="367"/>
    </location>
</feature>
<feature type="modified residue" description="N5-methylglutamine" evidence="1">
    <location>
        <position position="243"/>
    </location>
</feature>